<gene>
    <name evidence="1" type="primary">dapB</name>
    <name type="ordered locus">SAB1251</name>
</gene>
<keyword id="KW-0028">Amino-acid biosynthesis</keyword>
<keyword id="KW-0963">Cytoplasm</keyword>
<keyword id="KW-0220">Diaminopimelate biosynthesis</keyword>
<keyword id="KW-0457">Lysine biosynthesis</keyword>
<keyword id="KW-0520">NAD</keyword>
<keyword id="KW-0521">NADP</keyword>
<keyword id="KW-0560">Oxidoreductase</keyword>
<dbReference type="EC" id="1.17.1.8" evidence="1"/>
<dbReference type="EMBL" id="AJ938182">
    <property type="protein sequence ID" value="CAI80940.1"/>
    <property type="molecule type" value="Genomic_DNA"/>
</dbReference>
<dbReference type="RefSeq" id="WP_000698243.1">
    <property type="nucleotide sequence ID" value="NC_007622.1"/>
</dbReference>
<dbReference type="SMR" id="Q2YXX3"/>
<dbReference type="KEGG" id="sab:SAB1251"/>
<dbReference type="HOGENOM" id="CLU_047479_2_2_9"/>
<dbReference type="UniPathway" id="UPA00034">
    <property type="reaction ID" value="UER00018"/>
</dbReference>
<dbReference type="GO" id="GO:0005829">
    <property type="term" value="C:cytosol"/>
    <property type="evidence" value="ECO:0007669"/>
    <property type="project" value="TreeGrafter"/>
</dbReference>
<dbReference type="GO" id="GO:0008839">
    <property type="term" value="F:4-hydroxy-tetrahydrodipicolinate reductase"/>
    <property type="evidence" value="ECO:0007669"/>
    <property type="project" value="UniProtKB-EC"/>
</dbReference>
<dbReference type="GO" id="GO:0051287">
    <property type="term" value="F:NAD binding"/>
    <property type="evidence" value="ECO:0007669"/>
    <property type="project" value="UniProtKB-UniRule"/>
</dbReference>
<dbReference type="GO" id="GO:0050661">
    <property type="term" value="F:NADP binding"/>
    <property type="evidence" value="ECO:0007669"/>
    <property type="project" value="UniProtKB-UniRule"/>
</dbReference>
<dbReference type="GO" id="GO:0016726">
    <property type="term" value="F:oxidoreductase activity, acting on CH or CH2 groups, NAD or NADP as acceptor"/>
    <property type="evidence" value="ECO:0007669"/>
    <property type="project" value="UniProtKB-UniRule"/>
</dbReference>
<dbReference type="GO" id="GO:0019877">
    <property type="term" value="P:diaminopimelate biosynthetic process"/>
    <property type="evidence" value="ECO:0007669"/>
    <property type="project" value="UniProtKB-UniRule"/>
</dbReference>
<dbReference type="GO" id="GO:0009089">
    <property type="term" value="P:lysine biosynthetic process via diaminopimelate"/>
    <property type="evidence" value="ECO:0007669"/>
    <property type="project" value="UniProtKB-UniRule"/>
</dbReference>
<dbReference type="CDD" id="cd02274">
    <property type="entry name" value="DHDPR_N"/>
    <property type="match status" value="1"/>
</dbReference>
<dbReference type="FunFam" id="3.30.360.10:FF:000009">
    <property type="entry name" value="4-hydroxy-tetrahydrodipicolinate reductase"/>
    <property type="match status" value="1"/>
</dbReference>
<dbReference type="Gene3D" id="3.30.360.10">
    <property type="entry name" value="Dihydrodipicolinate Reductase, domain 2"/>
    <property type="match status" value="1"/>
</dbReference>
<dbReference type="Gene3D" id="3.40.50.720">
    <property type="entry name" value="NAD(P)-binding Rossmann-like Domain"/>
    <property type="match status" value="1"/>
</dbReference>
<dbReference type="HAMAP" id="MF_00102">
    <property type="entry name" value="DapB"/>
    <property type="match status" value="1"/>
</dbReference>
<dbReference type="InterPro" id="IPR022663">
    <property type="entry name" value="DapB_C"/>
</dbReference>
<dbReference type="InterPro" id="IPR000846">
    <property type="entry name" value="DapB_N"/>
</dbReference>
<dbReference type="InterPro" id="IPR022664">
    <property type="entry name" value="DapB_N_CS"/>
</dbReference>
<dbReference type="InterPro" id="IPR023940">
    <property type="entry name" value="DHDPR_bac"/>
</dbReference>
<dbReference type="InterPro" id="IPR036291">
    <property type="entry name" value="NAD(P)-bd_dom_sf"/>
</dbReference>
<dbReference type="NCBIfam" id="TIGR00036">
    <property type="entry name" value="dapB"/>
    <property type="match status" value="1"/>
</dbReference>
<dbReference type="PANTHER" id="PTHR20836:SF7">
    <property type="entry name" value="4-HYDROXY-TETRAHYDRODIPICOLINATE REDUCTASE"/>
    <property type="match status" value="1"/>
</dbReference>
<dbReference type="PANTHER" id="PTHR20836">
    <property type="entry name" value="DIHYDRODIPICOLINATE REDUCTASE"/>
    <property type="match status" value="1"/>
</dbReference>
<dbReference type="Pfam" id="PF05173">
    <property type="entry name" value="DapB_C"/>
    <property type="match status" value="1"/>
</dbReference>
<dbReference type="Pfam" id="PF01113">
    <property type="entry name" value="DapB_N"/>
    <property type="match status" value="1"/>
</dbReference>
<dbReference type="PIRSF" id="PIRSF000161">
    <property type="entry name" value="DHPR"/>
    <property type="match status" value="1"/>
</dbReference>
<dbReference type="SUPFAM" id="SSF55347">
    <property type="entry name" value="Glyceraldehyde-3-phosphate dehydrogenase-like, C-terminal domain"/>
    <property type="match status" value="1"/>
</dbReference>
<dbReference type="SUPFAM" id="SSF51735">
    <property type="entry name" value="NAD(P)-binding Rossmann-fold domains"/>
    <property type="match status" value="1"/>
</dbReference>
<dbReference type="PROSITE" id="PS01298">
    <property type="entry name" value="DAPB"/>
    <property type="match status" value="1"/>
</dbReference>
<accession>Q2YXX3</accession>
<proteinExistence type="inferred from homology"/>
<sequence length="240" mass="26737">MKILLIGYGAMNQRVARLAEEKGHEIVGVIEPTPRATTPYQQYQHIADVKDADVAIDFSNPNLLFPLLDEEFHLPLVVATTGEKEKLLNKLDELSQNMPVFFSANMSYGVHALTKILAAAVPLLDDFDIELTEAHHNKKVDAPSGTLEKLYDVIVSLKENVTPVYDRHELNEKRQPQDIGIHSIRGGTIVGEHEVLFAGTDETIQITHRAQSKDIFANGAIQAAERLVNKPNGFYTFDNL</sequence>
<comment type="function">
    <text evidence="1">Catalyzes the conversion of 4-hydroxy-tetrahydrodipicolinate (HTPA) to tetrahydrodipicolinate.</text>
</comment>
<comment type="catalytic activity">
    <reaction evidence="1">
        <text>(S)-2,3,4,5-tetrahydrodipicolinate + NAD(+) + H2O = (2S,4S)-4-hydroxy-2,3,4,5-tetrahydrodipicolinate + NADH + H(+)</text>
        <dbReference type="Rhea" id="RHEA:35323"/>
        <dbReference type="ChEBI" id="CHEBI:15377"/>
        <dbReference type="ChEBI" id="CHEBI:15378"/>
        <dbReference type="ChEBI" id="CHEBI:16845"/>
        <dbReference type="ChEBI" id="CHEBI:57540"/>
        <dbReference type="ChEBI" id="CHEBI:57945"/>
        <dbReference type="ChEBI" id="CHEBI:67139"/>
        <dbReference type="EC" id="1.17.1.8"/>
    </reaction>
</comment>
<comment type="catalytic activity">
    <reaction evidence="1">
        <text>(S)-2,3,4,5-tetrahydrodipicolinate + NADP(+) + H2O = (2S,4S)-4-hydroxy-2,3,4,5-tetrahydrodipicolinate + NADPH + H(+)</text>
        <dbReference type="Rhea" id="RHEA:35331"/>
        <dbReference type="ChEBI" id="CHEBI:15377"/>
        <dbReference type="ChEBI" id="CHEBI:15378"/>
        <dbReference type="ChEBI" id="CHEBI:16845"/>
        <dbReference type="ChEBI" id="CHEBI:57783"/>
        <dbReference type="ChEBI" id="CHEBI:58349"/>
        <dbReference type="ChEBI" id="CHEBI:67139"/>
        <dbReference type="EC" id="1.17.1.8"/>
    </reaction>
</comment>
<comment type="pathway">
    <text evidence="1">Amino-acid biosynthesis; L-lysine biosynthesis via DAP pathway; (S)-tetrahydrodipicolinate from L-aspartate: step 4/4.</text>
</comment>
<comment type="subcellular location">
    <subcellularLocation>
        <location evidence="1">Cytoplasm</location>
    </subcellularLocation>
</comment>
<comment type="similarity">
    <text evidence="1">Belongs to the DapB family.</text>
</comment>
<comment type="caution">
    <text evidence="2">Was originally thought to be a dihydrodipicolinate reductase (DHDPR), catalyzing the conversion of dihydrodipicolinate to tetrahydrodipicolinate. However, it was shown in E.coli that the substrate of the enzymatic reaction is not dihydrodipicolinate (DHDP) but in fact (2S,4S)-4-hydroxy-2,3,4,5-tetrahydrodipicolinic acid (HTPA), the product released by the DapA-catalyzed reaction.</text>
</comment>
<protein>
    <recommendedName>
        <fullName evidence="1">4-hydroxy-tetrahydrodipicolinate reductase</fullName>
        <shortName evidence="1">HTPA reductase</shortName>
        <ecNumber evidence="1">1.17.1.8</ecNumber>
    </recommendedName>
</protein>
<organism>
    <name type="scientific">Staphylococcus aureus (strain bovine RF122 / ET3-1)</name>
    <dbReference type="NCBI Taxonomy" id="273036"/>
    <lineage>
        <taxon>Bacteria</taxon>
        <taxon>Bacillati</taxon>
        <taxon>Bacillota</taxon>
        <taxon>Bacilli</taxon>
        <taxon>Bacillales</taxon>
        <taxon>Staphylococcaceae</taxon>
        <taxon>Staphylococcus</taxon>
    </lineage>
</organism>
<evidence type="ECO:0000255" key="1">
    <source>
        <dbReference type="HAMAP-Rule" id="MF_00102"/>
    </source>
</evidence>
<evidence type="ECO:0000305" key="2"/>
<feature type="chain" id="PRO_0000228390" description="4-hydroxy-tetrahydrodipicolinate reductase">
    <location>
        <begin position="1"/>
        <end position="240"/>
    </location>
</feature>
<feature type="active site" description="Proton donor/acceptor" evidence="1">
    <location>
        <position position="135"/>
    </location>
</feature>
<feature type="active site" description="Proton donor" evidence="1">
    <location>
        <position position="139"/>
    </location>
</feature>
<feature type="binding site" evidence="1">
    <location>
        <begin position="79"/>
        <end position="81"/>
    </location>
    <ligand>
        <name>NAD(+)</name>
        <dbReference type="ChEBI" id="CHEBI:57540"/>
    </ligand>
</feature>
<feature type="binding site" evidence="1">
    <location>
        <begin position="103"/>
        <end position="106"/>
    </location>
    <ligand>
        <name>NAD(+)</name>
        <dbReference type="ChEBI" id="CHEBI:57540"/>
    </ligand>
</feature>
<feature type="binding site" evidence="1">
    <location>
        <position position="136"/>
    </location>
    <ligand>
        <name>(S)-2,3,4,5-tetrahydrodipicolinate</name>
        <dbReference type="ChEBI" id="CHEBI:16845"/>
    </ligand>
</feature>
<feature type="binding site" evidence="1">
    <location>
        <begin position="145"/>
        <end position="146"/>
    </location>
    <ligand>
        <name>(S)-2,3,4,5-tetrahydrodipicolinate</name>
        <dbReference type="ChEBI" id="CHEBI:16845"/>
    </ligand>
</feature>
<reference key="1">
    <citation type="journal article" date="2007" name="PLoS ONE">
        <title>Molecular correlates of host specialization in Staphylococcus aureus.</title>
        <authorList>
            <person name="Herron-Olson L."/>
            <person name="Fitzgerald J.R."/>
            <person name="Musser J.M."/>
            <person name="Kapur V."/>
        </authorList>
    </citation>
    <scope>NUCLEOTIDE SEQUENCE [LARGE SCALE GENOMIC DNA]</scope>
    <source>
        <strain>bovine RF122 / ET3-1</strain>
    </source>
</reference>
<name>DAPB_STAAB</name>